<proteinExistence type="inferred from homology"/>
<keyword id="KW-0963">Cytoplasm</keyword>
<keyword id="KW-0648">Protein biosynthesis</keyword>
<dbReference type="EMBL" id="CP000151">
    <property type="protein sequence ID" value="ABB08920.1"/>
    <property type="molecule type" value="Genomic_DNA"/>
</dbReference>
<dbReference type="RefSeq" id="WP_011352458.1">
    <property type="nucleotide sequence ID" value="NZ_WNDV01000025.1"/>
</dbReference>
<dbReference type="SMR" id="Q39F46"/>
<dbReference type="GeneID" id="45095202"/>
<dbReference type="KEGG" id="bur:Bcep18194_A5326"/>
<dbReference type="PATRIC" id="fig|482957.22.peg.2275"/>
<dbReference type="HOGENOM" id="CLU_073981_2_1_4"/>
<dbReference type="Proteomes" id="UP000002705">
    <property type="component" value="Chromosome 1"/>
</dbReference>
<dbReference type="GO" id="GO:0005829">
    <property type="term" value="C:cytosol"/>
    <property type="evidence" value="ECO:0007669"/>
    <property type="project" value="GOC"/>
</dbReference>
<dbReference type="GO" id="GO:0043023">
    <property type="term" value="F:ribosomal large subunit binding"/>
    <property type="evidence" value="ECO:0007669"/>
    <property type="project" value="TreeGrafter"/>
</dbReference>
<dbReference type="GO" id="GO:0002184">
    <property type="term" value="P:cytoplasmic translational termination"/>
    <property type="evidence" value="ECO:0007669"/>
    <property type="project" value="TreeGrafter"/>
</dbReference>
<dbReference type="CDD" id="cd00520">
    <property type="entry name" value="RRF"/>
    <property type="match status" value="1"/>
</dbReference>
<dbReference type="FunFam" id="1.10.132.20:FF:000001">
    <property type="entry name" value="Ribosome-recycling factor"/>
    <property type="match status" value="1"/>
</dbReference>
<dbReference type="FunFam" id="3.30.1360.40:FF:000001">
    <property type="entry name" value="Ribosome-recycling factor"/>
    <property type="match status" value="1"/>
</dbReference>
<dbReference type="Gene3D" id="3.30.1360.40">
    <property type="match status" value="1"/>
</dbReference>
<dbReference type="Gene3D" id="1.10.132.20">
    <property type="entry name" value="Ribosome-recycling factor"/>
    <property type="match status" value="1"/>
</dbReference>
<dbReference type="HAMAP" id="MF_00040">
    <property type="entry name" value="RRF"/>
    <property type="match status" value="1"/>
</dbReference>
<dbReference type="InterPro" id="IPR002661">
    <property type="entry name" value="Ribosome_recyc_fac"/>
</dbReference>
<dbReference type="InterPro" id="IPR023584">
    <property type="entry name" value="Ribosome_recyc_fac_dom"/>
</dbReference>
<dbReference type="InterPro" id="IPR036191">
    <property type="entry name" value="RRF_sf"/>
</dbReference>
<dbReference type="NCBIfam" id="TIGR00496">
    <property type="entry name" value="frr"/>
    <property type="match status" value="1"/>
</dbReference>
<dbReference type="PANTHER" id="PTHR20982:SF3">
    <property type="entry name" value="MITOCHONDRIAL RIBOSOME RECYCLING FACTOR PSEUDO 1"/>
    <property type="match status" value="1"/>
</dbReference>
<dbReference type="PANTHER" id="PTHR20982">
    <property type="entry name" value="RIBOSOME RECYCLING FACTOR"/>
    <property type="match status" value="1"/>
</dbReference>
<dbReference type="Pfam" id="PF01765">
    <property type="entry name" value="RRF"/>
    <property type="match status" value="1"/>
</dbReference>
<dbReference type="SUPFAM" id="SSF55194">
    <property type="entry name" value="Ribosome recycling factor, RRF"/>
    <property type="match status" value="1"/>
</dbReference>
<accession>Q39F46</accession>
<organism>
    <name type="scientific">Burkholderia lata (strain ATCC 17760 / DSM 23089 / LMG 22485 / NCIMB 9086 / R18194 / 383)</name>
    <dbReference type="NCBI Taxonomy" id="482957"/>
    <lineage>
        <taxon>Bacteria</taxon>
        <taxon>Pseudomonadati</taxon>
        <taxon>Pseudomonadota</taxon>
        <taxon>Betaproteobacteria</taxon>
        <taxon>Burkholderiales</taxon>
        <taxon>Burkholderiaceae</taxon>
        <taxon>Burkholderia</taxon>
        <taxon>Burkholderia cepacia complex</taxon>
    </lineage>
</organism>
<sequence>MSVADTKKGVEQKMQRSIDAFKSDLAKIRTGRAHTGMLDHVQVDYYGSMVPISQVANMTLVDARTIGVQPWEKPMVAKVEKAIREADLGLNPATSGDQIRVPMPALTEERRRELTKVVKSEGETAKVAIRNLRRDANEALKKLVKDKEISEDDERRASDDVQKLTDKHVAEIDKLVQSKEAEIMTV</sequence>
<gene>
    <name evidence="1" type="primary">frr</name>
    <name type="ordered locus">Bcep18194_A5326</name>
</gene>
<comment type="function">
    <text evidence="1">Responsible for the release of ribosomes from messenger RNA at the termination of protein biosynthesis. May increase the efficiency of translation by recycling ribosomes from one round of translation to another.</text>
</comment>
<comment type="subcellular location">
    <subcellularLocation>
        <location evidence="1">Cytoplasm</location>
    </subcellularLocation>
</comment>
<comment type="similarity">
    <text evidence="1">Belongs to the RRF family.</text>
</comment>
<protein>
    <recommendedName>
        <fullName evidence="1">Ribosome-recycling factor</fullName>
        <shortName evidence="1">RRF</shortName>
    </recommendedName>
    <alternativeName>
        <fullName evidence="1">Ribosome-releasing factor</fullName>
    </alternativeName>
</protein>
<evidence type="ECO:0000255" key="1">
    <source>
        <dbReference type="HAMAP-Rule" id="MF_00040"/>
    </source>
</evidence>
<name>RRF_BURL3</name>
<feature type="chain" id="PRO_1000003124" description="Ribosome-recycling factor">
    <location>
        <begin position="1"/>
        <end position="186"/>
    </location>
</feature>
<reference key="1">
    <citation type="submission" date="2005-10" db="EMBL/GenBank/DDBJ databases">
        <title>Complete sequence of chromosome 1 of Burkholderia sp. 383.</title>
        <authorList>
            <consortium name="US DOE Joint Genome Institute"/>
            <person name="Copeland A."/>
            <person name="Lucas S."/>
            <person name="Lapidus A."/>
            <person name="Barry K."/>
            <person name="Detter J.C."/>
            <person name="Glavina T."/>
            <person name="Hammon N."/>
            <person name="Israni S."/>
            <person name="Pitluck S."/>
            <person name="Chain P."/>
            <person name="Malfatti S."/>
            <person name="Shin M."/>
            <person name="Vergez L."/>
            <person name="Schmutz J."/>
            <person name="Larimer F."/>
            <person name="Land M."/>
            <person name="Kyrpides N."/>
            <person name="Lykidis A."/>
            <person name="Richardson P."/>
        </authorList>
    </citation>
    <scope>NUCLEOTIDE SEQUENCE [LARGE SCALE GENOMIC DNA]</scope>
    <source>
        <strain>ATCC 17760 / DSM 23089 / LMG 22485 / NCIMB 9086 / R18194 / 383</strain>
    </source>
</reference>